<name>COQ5_DROME</name>
<protein>
    <recommendedName>
        <fullName evidence="1">2-methoxy-6-polyprenyl-1,4-benzoquinol methylase, mitochondrial</fullName>
        <ecNumber evidence="1">2.1.1.201</ecNumber>
    </recommendedName>
    <alternativeName>
        <fullName evidence="1">Ubiquinone biosynthesis methyltransferase COQ5</fullName>
    </alternativeName>
</protein>
<evidence type="ECO:0000255" key="1">
    <source>
        <dbReference type="HAMAP-Rule" id="MF_03191"/>
    </source>
</evidence>
<evidence type="ECO:0000256" key="2">
    <source>
        <dbReference type="SAM" id="MobiDB-lite"/>
    </source>
</evidence>
<evidence type="ECO:0000305" key="3"/>
<dbReference type="EC" id="2.1.1.201" evidence="1"/>
<dbReference type="EMBL" id="AE014298">
    <property type="protein sequence ID" value="AAF48239.1"/>
    <property type="molecule type" value="Genomic_DNA"/>
</dbReference>
<dbReference type="EMBL" id="AY122141">
    <property type="protein sequence ID" value="AAM52653.1"/>
    <property type="status" value="ALT_INIT"/>
    <property type="molecule type" value="mRNA"/>
</dbReference>
<dbReference type="RefSeq" id="NP_001285193.1">
    <property type="nucleotide sequence ID" value="NM_001298264.1"/>
</dbReference>
<dbReference type="RefSeq" id="NP_001285194.1">
    <property type="nucleotide sequence ID" value="NM_001298265.1"/>
</dbReference>
<dbReference type="RefSeq" id="NP_572865.1">
    <property type="nucleotide sequence ID" value="NM_132637.2"/>
</dbReference>
<dbReference type="SMR" id="Q9VYF8"/>
<dbReference type="BioGRID" id="58657">
    <property type="interactions" value="2"/>
</dbReference>
<dbReference type="FunCoup" id="Q9VYF8">
    <property type="interactions" value="1556"/>
</dbReference>
<dbReference type="IntAct" id="Q9VYF8">
    <property type="interactions" value="6"/>
</dbReference>
<dbReference type="STRING" id="7227.FBpp0311954"/>
<dbReference type="PaxDb" id="7227-FBpp0073568"/>
<dbReference type="DNASU" id="32272"/>
<dbReference type="EnsemblMetazoa" id="FBtr0073737">
    <property type="protein sequence ID" value="FBpp0073568"/>
    <property type="gene ID" value="FBgn0030460"/>
</dbReference>
<dbReference type="EnsemblMetazoa" id="FBtr0346124">
    <property type="protein sequence ID" value="FBpp0311953"/>
    <property type="gene ID" value="FBgn0030460"/>
</dbReference>
<dbReference type="EnsemblMetazoa" id="FBtr0346125">
    <property type="protein sequence ID" value="FBpp0311954"/>
    <property type="gene ID" value="FBgn0030460"/>
</dbReference>
<dbReference type="GeneID" id="32272"/>
<dbReference type="KEGG" id="dme:Dmel_CG2453"/>
<dbReference type="UCSC" id="CG2453-RA">
    <property type="organism name" value="d. melanogaster"/>
</dbReference>
<dbReference type="AGR" id="FB:FBgn0030460"/>
<dbReference type="CTD" id="84274"/>
<dbReference type="FlyBase" id="FBgn0030460">
    <property type="gene designation" value="Coq5"/>
</dbReference>
<dbReference type="VEuPathDB" id="VectorBase:FBgn0030460"/>
<dbReference type="eggNOG" id="KOG1540">
    <property type="taxonomic scope" value="Eukaryota"/>
</dbReference>
<dbReference type="HOGENOM" id="CLU_037990_0_1_1"/>
<dbReference type="InParanoid" id="Q9VYF8"/>
<dbReference type="OMA" id="MNDVMSM"/>
<dbReference type="OrthoDB" id="6329284at2759"/>
<dbReference type="PhylomeDB" id="Q9VYF8"/>
<dbReference type="Reactome" id="R-DME-2142789">
    <property type="pathway name" value="Ubiquinol biosynthesis"/>
</dbReference>
<dbReference type="UniPathway" id="UPA00232"/>
<dbReference type="BioGRID-ORCS" id="32272">
    <property type="hits" value="0 hits in 1 CRISPR screen"/>
</dbReference>
<dbReference type="GenomeRNAi" id="32272"/>
<dbReference type="PRO" id="PR:Q9VYF8"/>
<dbReference type="Proteomes" id="UP000000803">
    <property type="component" value="Chromosome X"/>
</dbReference>
<dbReference type="Bgee" id="FBgn0030460">
    <property type="expression patterns" value="Expressed in adult anterior midgut class I enteroendocrine cell in adult midgut (Drosophila) and 35 other cell types or tissues"/>
</dbReference>
<dbReference type="ExpressionAtlas" id="Q9VYF8">
    <property type="expression patterns" value="baseline and differential"/>
</dbReference>
<dbReference type="GO" id="GO:0031314">
    <property type="term" value="C:extrinsic component of mitochondrial inner membrane"/>
    <property type="evidence" value="ECO:0000303"/>
    <property type="project" value="FlyBase"/>
</dbReference>
<dbReference type="GO" id="GO:0005739">
    <property type="term" value="C:mitochondrion"/>
    <property type="evidence" value="ECO:0000250"/>
    <property type="project" value="UniProtKB"/>
</dbReference>
<dbReference type="GO" id="GO:0110142">
    <property type="term" value="C:ubiquinone biosynthesis complex"/>
    <property type="evidence" value="ECO:0000250"/>
    <property type="project" value="FlyBase"/>
</dbReference>
<dbReference type="GO" id="GO:0008425">
    <property type="term" value="F:2-methoxy-6-polyprenyl-1,4-benzoquinol methyltransferase activity"/>
    <property type="evidence" value="ECO:0000250"/>
    <property type="project" value="UniProtKB"/>
</dbReference>
<dbReference type="GO" id="GO:0032259">
    <property type="term" value="P:methylation"/>
    <property type="evidence" value="ECO:0007669"/>
    <property type="project" value="UniProtKB-KW"/>
</dbReference>
<dbReference type="GO" id="GO:0006744">
    <property type="term" value="P:ubiquinone biosynthetic process"/>
    <property type="evidence" value="ECO:0000315"/>
    <property type="project" value="FlyBase"/>
</dbReference>
<dbReference type="CDD" id="cd02440">
    <property type="entry name" value="AdoMet_MTases"/>
    <property type="match status" value="1"/>
</dbReference>
<dbReference type="FunFam" id="3.40.50.150:FF:000064">
    <property type="entry name" value="2-methoxy-6-polyprenyl-1,4-benzoquinol methylase, mitochondrial"/>
    <property type="match status" value="1"/>
</dbReference>
<dbReference type="Gene3D" id="3.40.50.150">
    <property type="entry name" value="Vaccinia Virus protein VP39"/>
    <property type="match status" value="1"/>
</dbReference>
<dbReference type="HAMAP" id="MF_01813">
    <property type="entry name" value="MenG_UbiE_methyltr"/>
    <property type="match status" value="1"/>
</dbReference>
<dbReference type="InterPro" id="IPR029063">
    <property type="entry name" value="SAM-dependent_MTases_sf"/>
</dbReference>
<dbReference type="InterPro" id="IPR004033">
    <property type="entry name" value="UbiE/COQ5_MeTrFase"/>
</dbReference>
<dbReference type="InterPro" id="IPR023576">
    <property type="entry name" value="UbiE/COQ5_MeTrFase_CS"/>
</dbReference>
<dbReference type="NCBIfam" id="TIGR01934">
    <property type="entry name" value="MenG_MenH_UbiE"/>
    <property type="match status" value="1"/>
</dbReference>
<dbReference type="NCBIfam" id="NF001244">
    <property type="entry name" value="PRK00216.1-5"/>
    <property type="match status" value="1"/>
</dbReference>
<dbReference type="PANTHER" id="PTHR43591:SF24">
    <property type="entry name" value="2-METHOXY-6-POLYPRENYL-1,4-BENZOQUINOL METHYLASE, MITOCHONDRIAL"/>
    <property type="match status" value="1"/>
</dbReference>
<dbReference type="PANTHER" id="PTHR43591">
    <property type="entry name" value="METHYLTRANSFERASE"/>
    <property type="match status" value="1"/>
</dbReference>
<dbReference type="Pfam" id="PF01209">
    <property type="entry name" value="Ubie_methyltran"/>
    <property type="match status" value="1"/>
</dbReference>
<dbReference type="SUPFAM" id="SSF53335">
    <property type="entry name" value="S-adenosyl-L-methionine-dependent methyltransferases"/>
    <property type="match status" value="1"/>
</dbReference>
<dbReference type="PROSITE" id="PS51608">
    <property type="entry name" value="SAM_MT_UBIE"/>
    <property type="match status" value="1"/>
</dbReference>
<dbReference type="PROSITE" id="PS01183">
    <property type="entry name" value="UBIE_1"/>
    <property type="match status" value="1"/>
</dbReference>
<dbReference type="PROSITE" id="PS01184">
    <property type="entry name" value="UBIE_2"/>
    <property type="match status" value="1"/>
</dbReference>
<reference key="1">
    <citation type="journal article" date="2000" name="Science">
        <title>The genome sequence of Drosophila melanogaster.</title>
        <authorList>
            <person name="Adams M.D."/>
            <person name="Celniker S.E."/>
            <person name="Holt R.A."/>
            <person name="Evans C.A."/>
            <person name="Gocayne J.D."/>
            <person name="Amanatides P.G."/>
            <person name="Scherer S.E."/>
            <person name="Li P.W."/>
            <person name="Hoskins R.A."/>
            <person name="Galle R.F."/>
            <person name="George R.A."/>
            <person name="Lewis S.E."/>
            <person name="Richards S."/>
            <person name="Ashburner M."/>
            <person name="Henderson S.N."/>
            <person name="Sutton G.G."/>
            <person name="Wortman J.R."/>
            <person name="Yandell M.D."/>
            <person name="Zhang Q."/>
            <person name="Chen L.X."/>
            <person name="Brandon R.C."/>
            <person name="Rogers Y.-H.C."/>
            <person name="Blazej R.G."/>
            <person name="Champe M."/>
            <person name="Pfeiffer B.D."/>
            <person name="Wan K.H."/>
            <person name="Doyle C."/>
            <person name="Baxter E.G."/>
            <person name="Helt G."/>
            <person name="Nelson C.R."/>
            <person name="Miklos G.L.G."/>
            <person name="Abril J.F."/>
            <person name="Agbayani A."/>
            <person name="An H.-J."/>
            <person name="Andrews-Pfannkoch C."/>
            <person name="Baldwin D."/>
            <person name="Ballew R.M."/>
            <person name="Basu A."/>
            <person name="Baxendale J."/>
            <person name="Bayraktaroglu L."/>
            <person name="Beasley E.M."/>
            <person name="Beeson K.Y."/>
            <person name="Benos P.V."/>
            <person name="Berman B.P."/>
            <person name="Bhandari D."/>
            <person name="Bolshakov S."/>
            <person name="Borkova D."/>
            <person name="Botchan M.R."/>
            <person name="Bouck J."/>
            <person name="Brokstein P."/>
            <person name="Brottier P."/>
            <person name="Burtis K.C."/>
            <person name="Busam D.A."/>
            <person name="Butler H."/>
            <person name="Cadieu E."/>
            <person name="Center A."/>
            <person name="Chandra I."/>
            <person name="Cherry J.M."/>
            <person name="Cawley S."/>
            <person name="Dahlke C."/>
            <person name="Davenport L.B."/>
            <person name="Davies P."/>
            <person name="de Pablos B."/>
            <person name="Delcher A."/>
            <person name="Deng Z."/>
            <person name="Mays A.D."/>
            <person name="Dew I."/>
            <person name="Dietz S.M."/>
            <person name="Dodson K."/>
            <person name="Doup L.E."/>
            <person name="Downes M."/>
            <person name="Dugan-Rocha S."/>
            <person name="Dunkov B.C."/>
            <person name="Dunn P."/>
            <person name="Durbin K.J."/>
            <person name="Evangelista C.C."/>
            <person name="Ferraz C."/>
            <person name="Ferriera S."/>
            <person name="Fleischmann W."/>
            <person name="Fosler C."/>
            <person name="Gabrielian A.E."/>
            <person name="Garg N.S."/>
            <person name="Gelbart W.M."/>
            <person name="Glasser K."/>
            <person name="Glodek A."/>
            <person name="Gong F."/>
            <person name="Gorrell J.H."/>
            <person name="Gu Z."/>
            <person name="Guan P."/>
            <person name="Harris M."/>
            <person name="Harris N.L."/>
            <person name="Harvey D.A."/>
            <person name="Heiman T.J."/>
            <person name="Hernandez J.R."/>
            <person name="Houck J."/>
            <person name="Hostin D."/>
            <person name="Houston K.A."/>
            <person name="Howland T.J."/>
            <person name="Wei M.-H."/>
            <person name="Ibegwam C."/>
            <person name="Jalali M."/>
            <person name="Kalush F."/>
            <person name="Karpen G.H."/>
            <person name="Ke Z."/>
            <person name="Kennison J.A."/>
            <person name="Ketchum K.A."/>
            <person name="Kimmel B.E."/>
            <person name="Kodira C.D."/>
            <person name="Kraft C.L."/>
            <person name="Kravitz S."/>
            <person name="Kulp D."/>
            <person name="Lai Z."/>
            <person name="Lasko P."/>
            <person name="Lei Y."/>
            <person name="Levitsky A.A."/>
            <person name="Li J.H."/>
            <person name="Li Z."/>
            <person name="Liang Y."/>
            <person name="Lin X."/>
            <person name="Liu X."/>
            <person name="Mattei B."/>
            <person name="McIntosh T.C."/>
            <person name="McLeod M.P."/>
            <person name="McPherson D."/>
            <person name="Merkulov G."/>
            <person name="Milshina N.V."/>
            <person name="Mobarry C."/>
            <person name="Morris J."/>
            <person name="Moshrefi A."/>
            <person name="Mount S.M."/>
            <person name="Moy M."/>
            <person name="Murphy B."/>
            <person name="Murphy L."/>
            <person name="Muzny D.M."/>
            <person name="Nelson D.L."/>
            <person name="Nelson D.R."/>
            <person name="Nelson K.A."/>
            <person name="Nixon K."/>
            <person name="Nusskern D.R."/>
            <person name="Pacleb J.M."/>
            <person name="Palazzolo M."/>
            <person name="Pittman G.S."/>
            <person name="Pan S."/>
            <person name="Pollard J."/>
            <person name="Puri V."/>
            <person name="Reese M.G."/>
            <person name="Reinert K."/>
            <person name="Remington K."/>
            <person name="Saunders R.D.C."/>
            <person name="Scheeler F."/>
            <person name="Shen H."/>
            <person name="Shue B.C."/>
            <person name="Siden-Kiamos I."/>
            <person name="Simpson M."/>
            <person name="Skupski M.P."/>
            <person name="Smith T.J."/>
            <person name="Spier E."/>
            <person name="Spradling A.C."/>
            <person name="Stapleton M."/>
            <person name="Strong R."/>
            <person name="Sun E."/>
            <person name="Svirskas R."/>
            <person name="Tector C."/>
            <person name="Turner R."/>
            <person name="Venter E."/>
            <person name="Wang A.H."/>
            <person name="Wang X."/>
            <person name="Wang Z.-Y."/>
            <person name="Wassarman D.A."/>
            <person name="Weinstock G.M."/>
            <person name="Weissenbach J."/>
            <person name="Williams S.M."/>
            <person name="Woodage T."/>
            <person name="Worley K.C."/>
            <person name="Wu D."/>
            <person name="Yang S."/>
            <person name="Yao Q.A."/>
            <person name="Ye J."/>
            <person name="Yeh R.-F."/>
            <person name="Zaveri J.S."/>
            <person name="Zhan M."/>
            <person name="Zhang G."/>
            <person name="Zhao Q."/>
            <person name="Zheng L."/>
            <person name="Zheng X.H."/>
            <person name="Zhong F.N."/>
            <person name="Zhong W."/>
            <person name="Zhou X."/>
            <person name="Zhu S.C."/>
            <person name="Zhu X."/>
            <person name="Smith H.O."/>
            <person name="Gibbs R.A."/>
            <person name="Myers E.W."/>
            <person name="Rubin G.M."/>
            <person name="Venter J.C."/>
        </authorList>
    </citation>
    <scope>NUCLEOTIDE SEQUENCE [LARGE SCALE GENOMIC DNA]</scope>
    <source>
        <strain>Berkeley</strain>
    </source>
</reference>
<reference key="2">
    <citation type="journal article" date="2002" name="Genome Biol.">
        <title>Annotation of the Drosophila melanogaster euchromatic genome: a systematic review.</title>
        <authorList>
            <person name="Misra S."/>
            <person name="Crosby M.A."/>
            <person name="Mungall C.J."/>
            <person name="Matthews B.B."/>
            <person name="Campbell K.S."/>
            <person name="Hradecky P."/>
            <person name="Huang Y."/>
            <person name="Kaminker J.S."/>
            <person name="Millburn G.H."/>
            <person name="Prochnik S.E."/>
            <person name="Smith C.D."/>
            <person name="Tupy J.L."/>
            <person name="Whitfield E.J."/>
            <person name="Bayraktaroglu L."/>
            <person name="Berman B.P."/>
            <person name="Bettencourt B.R."/>
            <person name="Celniker S.E."/>
            <person name="de Grey A.D.N.J."/>
            <person name="Drysdale R.A."/>
            <person name="Harris N.L."/>
            <person name="Richter J."/>
            <person name="Russo S."/>
            <person name="Schroeder A.J."/>
            <person name="Shu S.Q."/>
            <person name="Stapleton M."/>
            <person name="Yamada C."/>
            <person name="Ashburner M."/>
            <person name="Gelbart W.M."/>
            <person name="Rubin G.M."/>
            <person name="Lewis S.E."/>
        </authorList>
    </citation>
    <scope>GENOME REANNOTATION</scope>
    <source>
        <strain>Berkeley</strain>
    </source>
</reference>
<reference key="3">
    <citation type="journal article" date="2002" name="Genome Biol.">
        <title>A Drosophila full-length cDNA resource.</title>
        <authorList>
            <person name="Stapleton M."/>
            <person name="Carlson J.W."/>
            <person name="Brokstein P."/>
            <person name="Yu C."/>
            <person name="Champe M."/>
            <person name="George R.A."/>
            <person name="Guarin H."/>
            <person name="Kronmiller B."/>
            <person name="Pacleb J.M."/>
            <person name="Park S."/>
            <person name="Wan K.H."/>
            <person name="Rubin G.M."/>
            <person name="Celniker S.E."/>
        </authorList>
    </citation>
    <scope>NUCLEOTIDE SEQUENCE [LARGE SCALE MRNA]</scope>
    <source>
        <strain>Berkeley</strain>
        <tissue>Ovary</tissue>
    </source>
</reference>
<sequence length="301" mass="34338">MQTTRSTRLLSLARRFVHTRTASQSAQNSKGMASGAESISGKEKTTHFGFQTVRESEKEQKVHEVFEQVANSYDVMNDAMSLGIHRVWKDVFVERLGPTHGMRLLDMAGGTGDITFRYLRYLNNQPNPQQRPSHVTVSDINQHMLNVGEERAKRLGLTTDQLSNCTVAWQCADAEKLPFPDASFTAYTIAFGIRNCTHVDKVLSEAYRVLQPGGRFMCLEFSHLTNETMQWLYDQYSFQVIPPMGQLLAGQWQAYQYLVESIRRFPKQEQFKQMIEQAGFDQVSYENLTFGVVSIHSGFKL</sequence>
<feature type="transit peptide" description="Mitochondrion" evidence="1">
    <location>
        <begin position="1"/>
        <end position="16"/>
    </location>
</feature>
<feature type="chain" id="PRO_0000228635" description="2-methoxy-6-polyprenyl-1,4-benzoquinol methylase, mitochondrial">
    <location>
        <begin position="17"/>
        <end position="301"/>
    </location>
</feature>
<feature type="region of interest" description="Disordered" evidence="2">
    <location>
        <begin position="20"/>
        <end position="44"/>
    </location>
</feature>
<feature type="compositionally biased region" description="Polar residues" evidence="2">
    <location>
        <begin position="20"/>
        <end position="31"/>
    </location>
</feature>
<feature type="binding site" evidence="1">
    <location>
        <position position="111"/>
    </location>
    <ligand>
        <name>S-adenosyl-L-methionine</name>
        <dbReference type="ChEBI" id="CHEBI:59789"/>
    </ligand>
</feature>
<feature type="binding site" evidence="1">
    <location>
        <position position="139"/>
    </location>
    <ligand>
        <name>S-adenosyl-L-methionine</name>
        <dbReference type="ChEBI" id="CHEBI:59789"/>
    </ligand>
</feature>
<feature type="binding site" evidence="1">
    <location>
        <begin position="173"/>
        <end position="174"/>
    </location>
    <ligand>
        <name>S-adenosyl-L-methionine</name>
        <dbReference type="ChEBI" id="CHEBI:59789"/>
    </ligand>
</feature>
<keyword id="KW-0472">Membrane</keyword>
<keyword id="KW-0489">Methyltransferase</keyword>
<keyword id="KW-0496">Mitochondrion</keyword>
<keyword id="KW-0999">Mitochondrion inner membrane</keyword>
<keyword id="KW-1185">Reference proteome</keyword>
<keyword id="KW-0949">S-adenosyl-L-methionine</keyword>
<keyword id="KW-0808">Transferase</keyword>
<keyword id="KW-0809">Transit peptide</keyword>
<keyword id="KW-0831">Ubiquinone biosynthesis</keyword>
<organism>
    <name type="scientific">Drosophila melanogaster</name>
    <name type="common">Fruit fly</name>
    <dbReference type="NCBI Taxonomy" id="7227"/>
    <lineage>
        <taxon>Eukaryota</taxon>
        <taxon>Metazoa</taxon>
        <taxon>Ecdysozoa</taxon>
        <taxon>Arthropoda</taxon>
        <taxon>Hexapoda</taxon>
        <taxon>Insecta</taxon>
        <taxon>Pterygota</taxon>
        <taxon>Neoptera</taxon>
        <taxon>Endopterygota</taxon>
        <taxon>Diptera</taxon>
        <taxon>Brachycera</taxon>
        <taxon>Muscomorpha</taxon>
        <taxon>Ephydroidea</taxon>
        <taxon>Drosophilidae</taxon>
        <taxon>Drosophila</taxon>
        <taxon>Sophophora</taxon>
    </lineage>
</organism>
<proteinExistence type="evidence at transcript level"/>
<accession>Q9VYF8</accession>
<accession>Q8MR39</accession>
<gene>
    <name evidence="1" type="primary">Coq5</name>
    <name type="ORF">CG2453</name>
</gene>
<comment type="function">
    <text evidence="1">Methyltransferase required for the conversion of 2-polyprenyl-6-methoxy-1,4-benzoquinol (DDMQH2) to 2-polyprenyl-3-methyl-6-methoxy-1,4-benzoquinol (DMQH2).</text>
</comment>
<comment type="catalytic activity">
    <reaction evidence="1">
        <text>a 2-methoxy-6-(all-trans-polyprenyl)benzene-1,4-diol + S-adenosyl-L-methionine = a 5-methoxy-2-methyl-3-(all-trans-polyprenyl)benzene-1,4-diol + S-adenosyl-L-homocysteine + H(+)</text>
        <dbReference type="Rhea" id="RHEA:28286"/>
        <dbReference type="Rhea" id="RHEA-COMP:10858"/>
        <dbReference type="Rhea" id="RHEA-COMP:10859"/>
        <dbReference type="ChEBI" id="CHEBI:15378"/>
        <dbReference type="ChEBI" id="CHEBI:57856"/>
        <dbReference type="ChEBI" id="CHEBI:59789"/>
        <dbReference type="ChEBI" id="CHEBI:84166"/>
        <dbReference type="ChEBI" id="CHEBI:84167"/>
        <dbReference type="EC" id="2.1.1.201"/>
    </reaction>
</comment>
<comment type="pathway">
    <text evidence="1">Cofactor biosynthesis; ubiquinone biosynthesis.</text>
</comment>
<comment type="subunit">
    <text evidence="1">Component of a multi-subunit COQ enzyme complex.</text>
</comment>
<comment type="subcellular location">
    <subcellularLocation>
        <location evidence="1">Mitochondrion inner membrane</location>
        <topology evidence="1">Peripheral membrane protein</topology>
        <orientation evidence="1">Matrix side</orientation>
    </subcellularLocation>
</comment>
<comment type="similarity">
    <text evidence="1">Belongs to the class I-like SAM-binding methyltransferase superfamily. MenG/UbiE family.</text>
</comment>
<comment type="sequence caution" evidence="3">
    <conflict type="erroneous initiation">
        <sequence resource="EMBL-CDS" id="AAM52653"/>
    </conflict>
</comment>